<accession>A0AJY7</accession>
<sequence>MAKKSKVVKHERQKALVEQYAELRRTLKAEGRYEELRKLPRDSTPSRLHNRCALTGRPHGYMRKFGMSRIRFRELAHQGQLPGVKKASW</sequence>
<protein>
    <recommendedName>
        <fullName evidence="1">Small ribosomal subunit protein uS14A</fullName>
    </recommendedName>
    <alternativeName>
        <fullName evidence="2">30S ribosomal protein S14</fullName>
    </alternativeName>
</protein>
<keyword id="KW-0687">Ribonucleoprotein</keyword>
<keyword id="KW-0689">Ribosomal protein</keyword>
<keyword id="KW-0694">RNA-binding</keyword>
<keyword id="KW-0699">rRNA-binding</keyword>
<comment type="function">
    <text evidence="1">Binds 16S rRNA, required for the assembly of 30S particles and may also be responsible for determining the conformation of the 16S rRNA at the A site.</text>
</comment>
<comment type="subunit">
    <text evidence="1">Part of the 30S ribosomal subunit. Contacts proteins S3 and S10.</text>
</comment>
<comment type="similarity">
    <text evidence="1">Belongs to the universal ribosomal protein uS14 family.</text>
</comment>
<gene>
    <name evidence="1" type="primary">rpsN</name>
    <name type="ordered locus">lwe1901</name>
</gene>
<evidence type="ECO:0000255" key="1">
    <source>
        <dbReference type="HAMAP-Rule" id="MF_00537"/>
    </source>
</evidence>
<evidence type="ECO:0000305" key="2"/>
<proteinExistence type="inferred from homology"/>
<feature type="chain" id="PRO_1000128437" description="Small ribosomal subunit protein uS14A">
    <location>
        <begin position="1"/>
        <end position="89"/>
    </location>
</feature>
<name>RS14_LISW6</name>
<dbReference type="EMBL" id="AM263198">
    <property type="protein sequence ID" value="CAK21319.1"/>
    <property type="molecule type" value="Genomic_DNA"/>
</dbReference>
<dbReference type="RefSeq" id="WP_011702667.1">
    <property type="nucleotide sequence ID" value="NC_008555.1"/>
</dbReference>
<dbReference type="SMR" id="A0AJY7"/>
<dbReference type="STRING" id="386043.lwe1901"/>
<dbReference type="GeneID" id="61189802"/>
<dbReference type="KEGG" id="lwe:lwe1901"/>
<dbReference type="eggNOG" id="COG0199">
    <property type="taxonomic scope" value="Bacteria"/>
</dbReference>
<dbReference type="HOGENOM" id="CLU_139869_0_0_9"/>
<dbReference type="OrthoDB" id="9810484at2"/>
<dbReference type="Proteomes" id="UP000000779">
    <property type="component" value="Chromosome"/>
</dbReference>
<dbReference type="GO" id="GO:0005737">
    <property type="term" value="C:cytoplasm"/>
    <property type="evidence" value="ECO:0007669"/>
    <property type="project" value="UniProtKB-ARBA"/>
</dbReference>
<dbReference type="GO" id="GO:0015935">
    <property type="term" value="C:small ribosomal subunit"/>
    <property type="evidence" value="ECO:0007669"/>
    <property type="project" value="TreeGrafter"/>
</dbReference>
<dbReference type="GO" id="GO:0019843">
    <property type="term" value="F:rRNA binding"/>
    <property type="evidence" value="ECO:0007669"/>
    <property type="project" value="UniProtKB-UniRule"/>
</dbReference>
<dbReference type="GO" id="GO:0003735">
    <property type="term" value="F:structural constituent of ribosome"/>
    <property type="evidence" value="ECO:0007669"/>
    <property type="project" value="InterPro"/>
</dbReference>
<dbReference type="GO" id="GO:0006412">
    <property type="term" value="P:translation"/>
    <property type="evidence" value="ECO:0007669"/>
    <property type="project" value="UniProtKB-UniRule"/>
</dbReference>
<dbReference type="FunFam" id="4.10.830.10:FF:000003">
    <property type="entry name" value="30S ribosomal protein S14"/>
    <property type="match status" value="1"/>
</dbReference>
<dbReference type="Gene3D" id="4.10.830.10">
    <property type="entry name" value="30s Ribosomal Protein S14, Chain N"/>
    <property type="match status" value="1"/>
</dbReference>
<dbReference type="HAMAP" id="MF_00537">
    <property type="entry name" value="Ribosomal_uS14_1"/>
    <property type="match status" value="1"/>
</dbReference>
<dbReference type="InterPro" id="IPR001209">
    <property type="entry name" value="Ribosomal_uS14"/>
</dbReference>
<dbReference type="InterPro" id="IPR023036">
    <property type="entry name" value="Ribosomal_uS14_bac/plastid"/>
</dbReference>
<dbReference type="InterPro" id="IPR018271">
    <property type="entry name" value="Ribosomal_uS14_CS"/>
</dbReference>
<dbReference type="InterPro" id="IPR043140">
    <property type="entry name" value="Ribosomal_uS14_sf"/>
</dbReference>
<dbReference type="NCBIfam" id="NF006477">
    <property type="entry name" value="PRK08881.1"/>
    <property type="match status" value="1"/>
</dbReference>
<dbReference type="PANTHER" id="PTHR19836">
    <property type="entry name" value="30S RIBOSOMAL PROTEIN S14"/>
    <property type="match status" value="1"/>
</dbReference>
<dbReference type="PANTHER" id="PTHR19836:SF19">
    <property type="entry name" value="SMALL RIBOSOMAL SUBUNIT PROTEIN US14M"/>
    <property type="match status" value="1"/>
</dbReference>
<dbReference type="Pfam" id="PF00253">
    <property type="entry name" value="Ribosomal_S14"/>
    <property type="match status" value="1"/>
</dbReference>
<dbReference type="SUPFAM" id="SSF57716">
    <property type="entry name" value="Glucocorticoid receptor-like (DNA-binding domain)"/>
    <property type="match status" value="1"/>
</dbReference>
<dbReference type="PROSITE" id="PS00527">
    <property type="entry name" value="RIBOSOMAL_S14"/>
    <property type="match status" value="1"/>
</dbReference>
<organism>
    <name type="scientific">Listeria welshimeri serovar 6b (strain ATCC 35897 / DSM 20650 / CCUG 15529 / CIP 8149 / NCTC 11857 / SLCC 5334 / V8)</name>
    <dbReference type="NCBI Taxonomy" id="386043"/>
    <lineage>
        <taxon>Bacteria</taxon>
        <taxon>Bacillati</taxon>
        <taxon>Bacillota</taxon>
        <taxon>Bacilli</taxon>
        <taxon>Bacillales</taxon>
        <taxon>Listeriaceae</taxon>
        <taxon>Listeria</taxon>
    </lineage>
</organism>
<reference key="1">
    <citation type="journal article" date="2006" name="J. Bacteriol.">
        <title>Whole-genome sequence of Listeria welshimeri reveals common steps in genome reduction with Listeria innocua as compared to Listeria monocytogenes.</title>
        <authorList>
            <person name="Hain T."/>
            <person name="Steinweg C."/>
            <person name="Kuenne C.T."/>
            <person name="Billion A."/>
            <person name="Ghai R."/>
            <person name="Chatterjee S.S."/>
            <person name="Domann E."/>
            <person name="Kaerst U."/>
            <person name="Goesmann A."/>
            <person name="Bekel T."/>
            <person name="Bartels D."/>
            <person name="Kaiser O."/>
            <person name="Meyer F."/>
            <person name="Puehler A."/>
            <person name="Weisshaar B."/>
            <person name="Wehland J."/>
            <person name="Liang C."/>
            <person name="Dandekar T."/>
            <person name="Lampidis R."/>
            <person name="Kreft J."/>
            <person name="Goebel W."/>
            <person name="Chakraborty T."/>
        </authorList>
    </citation>
    <scope>NUCLEOTIDE SEQUENCE [LARGE SCALE GENOMIC DNA]</scope>
    <source>
        <strain>ATCC 35897 / DSM 20650 / CCUG 15529 / CIP 8149 / NCTC 11857 / SLCC 5334 / V8</strain>
    </source>
</reference>